<organism>
    <name type="scientific">Felis catus</name>
    <name type="common">Cat</name>
    <name type="synonym">Felis silvestris catus</name>
    <dbReference type="NCBI Taxonomy" id="9685"/>
    <lineage>
        <taxon>Eukaryota</taxon>
        <taxon>Metazoa</taxon>
        <taxon>Chordata</taxon>
        <taxon>Craniata</taxon>
        <taxon>Vertebrata</taxon>
        <taxon>Euteleostomi</taxon>
        <taxon>Mammalia</taxon>
        <taxon>Eutheria</taxon>
        <taxon>Laurasiatheria</taxon>
        <taxon>Carnivora</taxon>
        <taxon>Feliformia</taxon>
        <taxon>Felidae</taxon>
        <taxon>Felinae</taxon>
        <taxon>Felis</taxon>
    </lineage>
</organism>
<proteinExistence type="evidence at transcript level"/>
<keyword id="KW-1003">Cell membrane</keyword>
<keyword id="KW-0472">Membrane</keyword>
<keyword id="KW-0592">Phosphate transport</keyword>
<keyword id="KW-0597">Phosphoprotein</keyword>
<keyword id="KW-0675">Receptor</keyword>
<keyword id="KW-1185">Reference proteome</keyword>
<keyword id="KW-0769">Symport</keyword>
<keyword id="KW-0812">Transmembrane</keyword>
<keyword id="KW-1133">Transmembrane helix</keyword>
<keyword id="KW-0813">Transport</keyword>
<evidence type="ECO:0000250" key="1"/>
<evidence type="ECO:0000250" key="2">
    <source>
        <dbReference type="UniProtKB" id="Q8WUM9"/>
    </source>
</evidence>
<evidence type="ECO:0000255" key="3"/>
<evidence type="ECO:0000256" key="4">
    <source>
        <dbReference type="SAM" id="MobiDB-lite"/>
    </source>
</evidence>
<evidence type="ECO:0000305" key="5"/>
<sequence>MAFTGATLTTSTIAATAASGPLMDYLWMLILGFIIAFVLAFSVGANDVANSFGTAVGSGVVTLKQACILASIFETVGSVLLGAKVSETIRKGLIDVEMYNTTQQLLMAGSVSAMFGSAVWQLVASFLKLPISGTHCIVGATIGFSLVAKGQEGVKWSELIKIVMSWFISPLLSGIMSGILFFLVRAFILRKTDPVPNGLRALPVFYACTVGINLFSIMYTGAPLLGFDKLPLWGTILISVGCAVFCALIVWFFVCPRMKRKIEREIKSSPSESPLMEKKNSLKEDHEETKLSVSDIETRSPVSEVGSATVPLRAVVEERTVSFKLGDLEEAPERERLPSVDLKEETSIDSAMNGAVQLPNGNLVQFNQAVSNQMNSSGHYQYHTVHKDSGLYKELLHKLHLAKVGDCMGDSGDKPLRRNNSYTSYTMAICGMPLDSFRAKEGEQKGEEMEKLTWPNAESKKRIRMDSYTSYCNAVSDIHSASEMDMSVKAEMGLGDRKGSSSSLEEWYDQDKPEVSLLFQFLQILTACFGSFAHGGNDVSNAIGPLVALYLVYDTGDVSSKVATPIWLLLYGGVGICIGLWVWGRRVIQTMGKDLTPITPSSGFSIELASALTVVIASNIGLPISTTHCKVGSVVSVGWLRSKKAVDWRLFRNIFMAWFVTVPISGVISAAIMAVFKYVIL</sequence>
<name>S20A1_FELCA</name>
<accession>O97596</accession>
<accession>Q6R4N7</accession>
<protein>
    <recommendedName>
        <fullName>Sodium-dependent phosphate transporter 1</fullName>
    </recommendedName>
    <alternativeName>
        <fullName>Feline leukemia virus subtype-B receptor</fullName>
    </alternativeName>
    <alternativeName>
        <fullName>Phosphate transporter 1</fullName>
        <shortName>PiT-1</shortName>
    </alternativeName>
    <alternativeName>
        <fullName>Solute carrier family 20 member 1</fullName>
    </alternativeName>
</protein>
<gene>
    <name type="primary">Slc20a1</name>
    <name type="synonym">Pit1</name>
</gene>
<reference key="1">
    <citation type="journal article" date="1998" name="Biochim. Biophys. Acta">
        <title>Retrovirus receptor PiT-1 of the Felis catus.</title>
        <authorList>
            <person name="Rudra-Ganguly N."/>
            <person name="Ghosh A.K."/>
            <person name="Roy-Burman P."/>
        </authorList>
    </citation>
    <scope>NUCLEOTIDE SEQUENCE [MRNA]</scope>
    <source>
        <tissue>Lymphoma</tissue>
    </source>
</reference>
<reference key="2">
    <citation type="submission" date="2003-12" db="EMBL/GenBank/DDBJ databases">
        <title>Feline homolog of gibbon ape leukemia virus receptor (GALV1) is a receptor for feline leukemia virus (subtype-B).</title>
        <authorList>
            <person name="Lochrie M.A."/>
        </authorList>
    </citation>
    <scope>NUCLEOTIDE SEQUENCE [MRNA]</scope>
    <source>
        <tissue>Occipital cortex</tissue>
    </source>
</reference>
<comment type="function">
    <text evidence="2">Sodium-phosphate symporter which preferentially transports the monovalent form of phosphate with a stoichiometry of two sodium ions per phosphate ion. May play a role in extracellular matrix and cartilage calcification as well as in vascular calcification. Essential for cell proliferation but this function is independent of its phosphate transporter activity.</text>
</comment>
<comment type="catalytic activity">
    <reaction evidence="2">
        <text>2 Na(+)(out) + phosphate(out) = 2 Na(+)(in) + phosphate(in)</text>
        <dbReference type="Rhea" id="RHEA:71259"/>
        <dbReference type="ChEBI" id="CHEBI:29101"/>
        <dbReference type="ChEBI" id="CHEBI:43474"/>
    </reaction>
</comment>
<comment type="subcellular location">
    <subcellularLocation>
        <location evidence="2">Cell membrane</location>
        <topology evidence="3">Multi-pass membrane protein</topology>
    </subcellularLocation>
</comment>
<comment type="miscellaneous">
    <text>Ectopic expression of feline SLC20A1 in guinea pig cells which are not permissive to Feline leukemia virus subgroup B (FeLV-B) confers susceptibility to FeLV-B infection.</text>
</comment>
<comment type="similarity">
    <text evidence="5">Belongs to the inorganic phosphate transporter (PiT) (TC 2.A.20) family.</text>
</comment>
<dbReference type="EMBL" id="AF074085">
    <property type="protein sequence ID" value="AAD08995.1"/>
    <property type="molecule type" value="mRNA"/>
</dbReference>
<dbReference type="EMBL" id="AY514486">
    <property type="protein sequence ID" value="AAS00090.1"/>
    <property type="molecule type" value="mRNA"/>
</dbReference>
<dbReference type="RefSeq" id="NP_001009840.1">
    <property type="nucleotide sequence ID" value="NM_001009840.1"/>
</dbReference>
<dbReference type="RefSeq" id="XP_011279434.1">
    <property type="nucleotide sequence ID" value="XM_011281132.2"/>
</dbReference>
<dbReference type="RefSeq" id="XP_019681729.1">
    <property type="nucleotide sequence ID" value="XM_019826170.1"/>
</dbReference>
<dbReference type="SMR" id="O97596"/>
<dbReference type="STRING" id="9685.ENSFCAP00000007501"/>
<dbReference type="PaxDb" id="9685-ENSFCAP00000007501"/>
<dbReference type="GeneID" id="493789"/>
<dbReference type="KEGG" id="fca:493789"/>
<dbReference type="CTD" id="6574"/>
<dbReference type="eggNOG" id="KOG2493">
    <property type="taxonomic scope" value="Eukaryota"/>
</dbReference>
<dbReference type="HOGENOM" id="CLU_015355_3_1_1"/>
<dbReference type="InParanoid" id="O97596"/>
<dbReference type="OrthoDB" id="260807at2759"/>
<dbReference type="Proteomes" id="UP000011712">
    <property type="component" value="Unplaced"/>
</dbReference>
<dbReference type="GO" id="GO:0005886">
    <property type="term" value="C:plasma membrane"/>
    <property type="evidence" value="ECO:0000250"/>
    <property type="project" value="UniProtKB"/>
</dbReference>
<dbReference type="GO" id="GO:0005315">
    <property type="term" value="F:phosphate transmembrane transporter activity"/>
    <property type="evidence" value="ECO:0000318"/>
    <property type="project" value="GO_Central"/>
</dbReference>
<dbReference type="GO" id="GO:0005436">
    <property type="term" value="F:sodium:phosphate symporter activity"/>
    <property type="evidence" value="ECO:0000250"/>
    <property type="project" value="UniProtKB"/>
</dbReference>
<dbReference type="GO" id="GO:0031214">
    <property type="term" value="P:biomineral tissue development"/>
    <property type="evidence" value="ECO:0007669"/>
    <property type="project" value="Ensembl"/>
</dbReference>
<dbReference type="GO" id="GO:0008283">
    <property type="term" value="P:cell population proliferation"/>
    <property type="evidence" value="ECO:0000250"/>
    <property type="project" value="UniProtKB"/>
</dbReference>
<dbReference type="GO" id="GO:0035435">
    <property type="term" value="P:phosphate ion transmembrane transport"/>
    <property type="evidence" value="ECO:0000318"/>
    <property type="project" value="GO_Central"/>
</dbReference>
<dbReference type="InterPro" id="IPR001204">
    <property type="entry name" value="Phos_transporter"/>
</dbReference>
<dbReference type="PANTHER" id="PTHR11101">
    <property type="entry name" value="PHOSPHATE TRANSPORTER"/>
    <property type="match status" value="1"/>
</dbReference>
<dbReference type="PANTHER" id="PTHR11101:SF46">
    <property type="entry name" value="SODIUM-DEPENDENT PHOSPHATE TRANSPORTER 1"/>
    <property type="match status" value="1"/>
</dbReference>
<dbReference type="Pfam" id="PF01384">
    <property type="entry name" value="PHO4"/>
    <property type="match status" value="1"/>
</dbReference>
<feature type="chain" id="PRO_0000080770" description="Sodium-dependent phosphate transporter 1">
    <location>
        <begin position="1"/>
        <end position="681"/>
    </location>
</feature>
<feature type="transmembrane region" description="Helical" evidence="3">
    <location>
        <begin position="25"/>
        <end position="45"/>
    </location>
</feature>
<feature type="transmembrane region" description="Helical" evidence="3">
    <location>
        <begin position="66"/>
        <end position="86"/>
    </location>
</feature>
<feature type="transmembrane region" description="Helical" evidence="3">
    <location>
        <begin position="106"/>
        <end position="126"/>
    </location>
</feature>
<feature type="transmembrane region" description="Helical" evidence="3">
    <location>
        <begin position="162"/>
        <end position="182"/>
    </location>
</feature>
<feature type="transmembrane region" description="Helical" evidence="3">
    <location>
        <begin position="207"/>
        <end position="227"/>
    </location>
</feature>
<feature type="transmembrane region" description="Helical" evidence="3">
    <location>
        <begin position="234"/>
        <end position="254"/>
    </location>
</feature>
<feature type="transmembrane region" description="Helical" evidence="3">
    <location>
        <begin position="515"/>
        <end position="535"/>
    </location>
</feature>
<feature type="transmembrane region" description="Helical" evidence="3">
    <location>
        <begin position="562"/>
        <end position="582"/>
    </location>
</feature>
<feature type="transmembrane region" description="Helical" evidence="3">
    <location>
        <begin position="604"/>
        <end position="624"/>
    </location>
</feature>
<feature type="transmembrane region" description="Helical" evidence="3">
    <location>
        <begin position="654"/>
        <end position="674"/>
    </location>
</feature>
<feature type="region of interest" description="Disordered" evidence="4">
    <location>
        <begin position="269"/>
        <end position="296"/>
    </location>
</feature>
<feature type="region of interest" description="A" evidence="1">
    <location>
        <begin position="554"/>
        <end position="562"/>
    </location>
</feature>
<feature type="compositionally biased region" description="Basic and acidic residues" evidence="4">
    <location>
        <begin position="275"/>
        <end position="290"/>
    </location>
</feature>
<feature type="modified residue" description="Phosphoserine" evidence="2">
    <location>
        <position position="269"/>
    </location>
</feature>
<feature type="modified residue" description="Phosphoserine" evidence="2">
    <location>
        <position position="273"/>
    </location>
</feature>
<feature type="sequence conflict" description="In Ref. 2; AAS00090." evidence="5" ref="2">
    <original>L</original>
    <variation>F</variation>
    <location>
        <position position="127"/>
    </location>
</feature>